<organism>
    <name type="scientific">Homo sapiens</name>
    <name type="common">Human</name>
    <dbReference type="NCBI Taxonomy" id="9606"/>
    <lineage>
        <taxon>Eukaryota</taxon>
        <taxon>Metazoa</taxon>
        <taxon>Chordata</taxon>
        <taxon>Craniata</taxon>
        <taxon>Vertebrata</taxon>
        <taxon>Euteleostomi</taxon>
        <taxon>Mammalia</taxon>
        <taxon>Eutheria</taxon>
        <taxon>Euarchontoglires</taxon>
        <taxon>Primates</taxon>
        <taxon>Haplorrhini</taxon>
        <taxon>Catarrhini</taxon>
        <taxon>Hominidae</taxon>
        <taxon>Homo</taxon>
    </lineage>
</organism>
<keyword id="KW-0002">3D-structure</keyword>
<keyword id="KW-0025">Alternative splicing</keyword>
<keyword id="KW-0488">Methylation</keyword>
<keyword id="KW-0489">Methyltransferase</keyword>
<keyword id="KW-0539">Nucleus</keyword>
<keyword id="KW-1267">Proteomics identification</keyword>
<keyword id="KW-1185">Reference proteome</keyword>
<keyword id="KW-0949">S-adenosyl-L-methionine</keyword>
<keyword id="KW-0808">Transferase</keyword>
<dbReference type="EC" id="2.1.1.-" evidence="4 5 6 7"/>
<dbReference type="EMBL" id="AK024801">
    <property type="protein sequence ID" value="BAB15011.1"/>
    <property type="molecule type" value="mRNA"/>
</dbReference>
<dbReference type="EMBL" id="AK290495">
    <property type="protein sequence ID" value="BAF83184.1"/>
    <property type="molecule type" value="mRNA"/>
</dbReference>
<dbReference type="EMBL" id="AC009118">
    <property type="status" value="NOT_ANNOTATED_CDS"/>
    <property type="molecule type" value="Genomic_DNA"/>
</dbReference>
<dbReference type="EMBL" id="BC022451">
    <property type="protein sequence ID" value="AAH22451.1"/>
    <property type="molecule type" value="mRNA"/>
</dbReference>
<dbReference type="CCDS" id="CCDS10798.1">
    <molecule id="Q8TBK2-2"/>
</dbReference>
<dbReference type="CCDS" id="CCDS54013.1">
    <molecule id="Q8TBK2-1"/>
</dbReference>
<dbReference type="RefSeq" id="NP_001153777.1">
    <molecule id="Q8TBK2-1"/>
    <property type="nucleotide sequence ID" value="NM_001160305.4"/>
</dbReference>
<dbReference type="RefSeq" id="NP_079136.2">
    <molecule id="Q8TBK2-2"/>
    <property type="nucleotide sequence ID" value="NM_024860.3"/>
</dbReference>
<dbReference type="PDB" id="3QXY">
    <property type="method" value="X-ray"/>
    <property type="resolution" value="2.09 A"/>
    <property type="chains" value="A/B=1-473"/>
</dbReference>
<dbReference type="PDB" id="3RC0">
    <property type="method" value="X-ray"/>
    <property type="resolution" value="2.19 A"/>
    <property type="chains" value="A/B=1-473"/>
</dbReference>
<dbReference type="PDBsum" id="3QXY"/>
<dbReference type="PDBsum" id="3RC0"/>
<dbReference type="SMR" id="Q8TBK2"/>
<dbReference type="BioGRID" id="122996">
    <property type="interactions" value="58"/>
</dbReference>
<dbReference type="FunCoup" id="Q8TBK2">
    <property type="interactions" value="2146"/>
</dbReference>
<dbReference type="IntAct" id="Q8TBK2">
    <property type="interactions" value="6"/>
</dbReference>
<dbReference type="MINT" id="Q8TBK2"/>
<dbReference type="STRING" id="9606.ENSP00000219315"/>
<dbReference type="BindingDB" id="Q8TBK2"/>
<dbReference type="iPTMnet" id="Q8TBK2"/>
<dbReference type="PhosphoSitePlus" id="Q8TBK2"/>
<dbReference type="BioMuta" id="SETD6"/>
<dbReference type="DMDM" id="308153495"/>
<dbReference type="jPOST" id="Q8TBK2"/>
<dbReference type="MassIVE" id="Q8TBK2"/>
<dbReference type="PaxDb" id="9606-ENSP00000219315"/>
<dbReference type="PeptideAtlas" id="Q8TBK2"/>
<dbReference type="ProteomicsDB" id="74022">
    <molecule id="Q8TBK2-1"/>
</dbReference>
<dbReference type="ProteomicsDB" id="74023">
    <molecule id="Q8TBK2-2"/>
</dbReference>
<dbReference type="Pumba" id="Q8TBK2"/>
<dbReference type="Antibodypedia" id="48742">
    <property type="antibodies" value="138 antibodies from 26 providers"/>
</dbReference>
<dbReference type="DNASU" id="79918"/>
<dbReference type="Ensembl" id="ENST00000219315.9">
    <molecule id="Q8TBK2-1"/>
    <property type="protein sequence ID" value="ENSP00000219315.5"/>
    <property type="gene ID" value="ENSG00000103037.12"/>
</dbReference>
<dbReference type="Ensembl" id="ENST00000310682.6">
    <molecule id="Q8TBK2-2"/>
    <property type="protein sequence ID" value="ENSP00000310082.2"/>
    <property type="gene ID" value="ENSG00000103037.12"/>
</dbReference>
<dbReference type="GeneID" id="79918"/>
<dbReference type="KEGG" id="hsa:79918"/>
<dbReference type="MANE-Select" id="ENST00000219315.9">
    <property type="protein sequence ID" value="ENSP00000219315.5"/>
    <property type="RefSeq nucleotide sequence ID" value="NM_001160305.4"/>
    <property type="RefSeq protein sequence ID" value="NP_001153777.1"/>
</dbReference>
<dbReference type="UCSC" id="uc002enr.4">
    <molecule id="Q8TBK2-1"/>
    <property type="organism name" value="human"/>
</dbReference>
<dbReference type="AGR" id="HGNC:26116"/>
<dbReference type="CTD" id="79918"/>
<dbReference type="DisGeNET" id="79918"/>
<dbReference type="GeneCards" id="SETD6"/>
<dbReference type="HGNC" id="HGNC:26116">
    <property type="gene designation" value="SETD6"/>
</dbReference>
<dbReference type="HPA" id="ENSG00000103037">
    <property type="expression patterns" value="Low tissue specificity"/>
</dbReference>
<dbReference type="MIM" id="616424">
    <property type="type" value="gene"/>
</dbReference>
<dbReference type="neXtProt" id="NX_Q8TBK2"/>
<dbReference type="OpenTargets" id="ENSG00000103037"/>
<dbReference type="PharmGKB" id="PA143485614"/>
<dbReference type="VEuPathDB" id="HostDB:ENSG00000103037"/>
<dbReference type="eggNOG" id="KOG1338">
    <property type="taxonomic scope" value="Eukaryota"/>
</dbReference>
<dbReference type="GeneTree" id="ENSGT00940000153577"/>
<dbReference type="HOGENOM" id="CLU_017135_2_0_1"/>
<dbReference type="InParanoid" id="Q8TBK2"/>
<dbReference type="OMA" id="RVDWWLE"/>
<dbReference type="OrthoDB" id="341421at2759"/>
<dbReference type="PAN-GO" id="Q8TBK2">
    <property type="GO annotations" value="3 GO annotations based on evolutionary models"/>
</dbReference>
<dbReference type="PhylomeDB" id="Q8TBK2"/>
<dbReference type="TreeFam" id="TF106399"/>
<dbReference type="PathwayCommons" id="Q8TBK2"/>
<dbReference type="Reactome" id="R-HSA-3214841">
    <property type="pathway name" value="PKMTs methylate histone lysines"/>
</dbReference>
<dbReference type="SignaLink" id="Q8TBK2"/>
<dbReference type="BioGRID-ORCS" id="79918">
    <property type="hits" value="18 hits in 1170 CRISPR screens"/>
</dbReference>
<dbReference type="ChiTaRS" id="SETD6">
    <property type="organism name" value="human"/>
</dbReference>
<dbReference type="EvolutionaryTrace" id="Q8TBK2"/>
<dbReference type="GenomeRNAi" id="79918"/>
<dbReference type="Pharos" id="Q8TBK2">
    <property type="development level" value="Tbio"/>
</dbReference>
<dbReference type="PRO" id="PR:Q8TBK2"/>
<dbReference type="Proteomes" id="UP000005640">
    <property type="component" value="Chromosome 16"/>
</dbReference>
<dbReference type="RNAct" id="Q8TBK2">
    <property type="molecule type" value="protein"/>
</dbReference>
<dbReference type="Bgee" id="ENSG00000103037">
    <property type="expression patterns" value="Expressed in secondary oocyte and 192 other cell types or tissues"/>
</dbReference>
<dbReference type="ExpressionAtlas" id="Q8TBK2">
    <property type="expression patterns" value="baseline and differential"/>
</dbReference>
<dbReference type="GO" id="GO:0005829">
    <property type="term" value="C:cytosol"/>
    <property type="evidence" value="ECO:0000314"/>
    <property type="project" value="HPA"/>
</dbReference>
<dbReference type="GO" id="GO:0005654">
    <property type="term" value="C:nucleoplasm"/>
    <property type="evidence" value="ECO:0000314"/>
    <property type="project" value="HPA"/>
</dbReference>
<dbReference type="GO" id="GO:0005634">
    <property type="term" value="C:nucleus"/>
    <property type="evidence" value="ECO:0000314"/>
    <property type="project" value="UniProtKB"/>
</dbReference>
<dbReference type="GO" id="GO:0051059">
    <property type="term" value="F:NF-kappaB binding"/>
    <property type="evidence" value="ECO:0000353"/>
    <property type="project" value="UniProtKB"/>
</dbReference>
<dbReference type="GO" id="GO:0016279">
    <property type="term" value="F:protein-lysine N-methyltransferase activity"/>
    <property type="evidence" value="ECO:0000314"/>
    <property type="project" value="UniProtKB"/>
</dbReference>
<dbReference type="GO" id="GO:1904047">
    <property type="term" value="F:S-adenosyl-L-methionine binding"/>
    <property type="evidence" value="ECO:0000314"/>
    <property type="project" value="UniProtKB"/>
</dbReference>
<dbReference type="GO" id="GO:0032088">
    <property type="term" value="P:negative regulation of NF-kappaB transcription factor activity"/>
    <property type="evidence" value="ECO:0000315"/>
    <property type="project" value="UniProtKB"/>
</dbReference>
<dbReference type="GO" id="GO:0018026">
    <property type="term" value="P:peptidyl-lysine monomethylation"/>
    <property type="evidence" value="ECO:0000314"/>
    <property type="project" value="UniProtKB"/>
</dbReference>
<dbReference type="GO" id="GO:0050727">
    <property type="term" value="P:regulation of inflammatory response"/>
    <property type="evidence" value="ECO:0000315"/>
    <property type="project" value="UniProtKB"/>
</dbReference>
<dbReference type="GO" id="GO:0048863">
    <property type="term" value="P:stem cell differentiation"/>
    <property type="evidence" value="ECO:0000250"/>
    <property type="project" value="UniProtKB"/>
</dbReference>
<dbReference type="GO" id="GO:0019827">
    <property type="term" value="P:stem cell population maintenance"/>
    <property type="evidence" value="ECO:0000250"/>
    <property type="project" value="UniProtKB"/>
</dbReference>
<dbReference type="CDD" id="cd19178">
    <property type="entry name" value="SET_SETD6"/>
    <property type="match status" value="1"/>
</dbReference>
<dbReference type="FunFam" id="3.90.1410.10:FF:000004">
    <property type="entry name" value="N-lysine methyltransferase SETD6"/>
    <property type="match status" value="1"/>
</dbReference>
<dbReference type="FunFam" id="3.90.1420.10:FF:000002">
    <property type="entry name" value="N-lysine methyltransferase SETD6"/>
    <property type="match status" value="1"/>
</dbReference>
<dbReference type="Gene3D" id="3.90.1420.10">
    <property type="entry name" value="Rubisco LSMT, substrate-binding domain"/>
    <property type="match status" value="1"/>
</dbReference>
<dbReference type="Gene3D" id="3.90.1410.10">
    <property type="entry name" value="set domain protein methyltransferase, domain 1"/>
    <property type="match status" value="1"/>
</dbReference>
<dbReference type="InterPro" id="IPR011383">
    <property type="entry name" value="N-lys_methylase_SETD6"/>
</dbReference>
<dbReference type="InterPro" id="IPR015353">
    <property type="entry name" value="Rubisco_LSMT_subst-bd"/>
</dbReference>
<dbReference type="InterPro" id="IPR036464">
    <property type="entry name" value="Rubisco_LSMT_subst-bd_sf"/>
</dbReference>
<dbReference type="InterPro" id="IPR001214">
    <property type="entry name" value="SET_dom"/>
</dbReference>
<dbReference type="InterPro" id="IPR046341">
    <property type="entry name" value="SET_dom_sf"/>
</dbReference>
<dbReference type="InterPro" id="IPR050600">
    <property type="entry name" value="SETD3_SETD6_MTase"/>
</dbReference>
<dbReference type="InterPro" id="IPR044430">
    <property type="entry name" value="SETD6_SET"/>
</dbReference>
<dbReference type="PANTHER" id="PTHR13271:SF34">
    <property type="entry name" value="N-LYSINE METHYLTRANSFERASE SETD6"/>
    <property type="match status" value="1"/>
</dbReference>
<dbReference type="PANTHER" id="PTHR13271">
    <property type="entry name" value="UNCHARACTERIZED PUTATIVE METHYLTRANSFERASE"/>
    <property type="match status" value="1"/>
</dbReference>
<dbReference type="Pfam" id="PF09273">
    <property type="entry name" value="Rubis-subs-bind"/>
    <property type="match status" value="1"/>
</dbReference>
<dbReference type="Pfam" id="PF00856">
    <property type="entry name" value="SET"/>
    <property type="match status" value="1"/>
</dbReference>
<dbReference type="PIRSF" id="PIRSF011771">
    <property type="entry name" value="RMS1_SET"/>
    <property type="match status" value="1"/>
</dbReference>
<dbReference type="SUPFAM" id="SSF81822">
    <property type="entry name" value="RuBisCo LSMT C-terminal, substrate-binding domain"/>
    <property type="match status" value="1"/>
</dbReference>
<dbReference type="SUPFAM" id="SSF82199">
    <property type="entry name" value="SET domain"/>
    <property type="match status" value="1"/>
</dbReference>
<dbReference type="PROSITE" id="PS50280">
    <property type="entry name" value="SET"/>
    <property type="match status" value="1"/>
</dbReference>
<proteinExistence type="evidence at protein level"/>
<accession>Q8TBK2</accession>
<accession>A8K380</accession>
<accession>B5ME38</accession>
<accession>Q9H787</accession>
<gene>
    <name evidence="9 15" type="primary">SETD6</name>
</gene>
<feature type="chain" id="PRO_0000281889" description="N-lysine methyltransferase SETD6">
    <location>
        <begin position="1"/>
        <end position="473"/>
    </location>
</feature>
<feature type="domain" description="SET" evidence="2">
    <location>
        <begin position="60"/>
        <end position="286"/>
    </location>
</feature>
<feature type="binding site" evidence="5">
    <location>
        <begin position="73"/>
        <end position="75"/>
    </location>
    <ligand>
        <name>S-adenosyl-L-methionine</name>
        <dbReference type="ChEBI" id="CHEBI:59789"/>
    </ligand>
</feature>
<feature type="binding site" evidence="5">
    <location>
        <position position="122"/>
    </location>
    <ligand>
        <name>substrate</name>
    </ligand>
</feature>
<feature type="binding site" evidence="5">
    <location>
        <position position="223"/>
    </location>
    <ligand>
        <name>S-adenosyl-L-methionine</name>
        <dbReference type="ChEBI" id="CHEBI:59789"/>
    </ligand>
</feature>
<feature type="binding site" evidence="5">
    <location>
        <position position="224"/>
    </location>
    <ligand>
        <name>substrate</name>
    </ligand>
</feature>
<feature type="binding site" evidence="5">
    <location>
        <position position="226"/>
    </location>
    <ligand>
        <name>substrate</name>
    </ligand>
</feature>
<feature type="binding site" evidence="5">
    <location>
        <begin position="251"/>
        <end position="252"/>
    </location>
    <ligand>
        <name>S-adenosyl-L-methionine</name>
        <dbReference type="ChEBI" id="CHEBI:59789"/>
    </ligand>
</feature>
<feature type="binding site" evidence="5">
    <location>
        <position position="262"/>
    </location>
    <ligand>
        <name>substrate</name>
    </ligand>
</feature>
<feature type="binding site" evidence="5">
    <location>
        <position position="297"/>
    </location>
    <ligand>
        <name>S-adenosyl-L-methionine</name>
        <dbReference type="ChEBI" id="CHEBI:59789"/>
    </ligand>
</feature>
<feature type="binding site" evidence="5">
    <location>
        <position position="297"/>
    </location>
    <ligand>
        <name>substrate</name>
    </ligand>
</feature>
<feature type="modified residue" description="N6-methylated lysine; by autocatalysis" evidence="7">
    <location>
        <position position="39"/>
    </location>
</feature>
<feature type="modified residue" description="N6-methylated lysine; by autocatalysis" evidence="7">
    <location>
        <position position="179"/>
    </location>
</feature>
<feature type="modified residue" description="N6-methylated lysine; by autocatalysis" evidence="14">
    <location>
        <position position="372"/>
    </location>
</feature>
<feature type="splice variant" id="VSP_024093" description="In isoform 2." evidence="8">
    <location>
        <begin position="40"/>
        <end position="63"/>
    </location>
</feature>
<feature type="sequence variant" id="VAR_064590" description="In dbSNP:rs17852020." evidence="3">
    <original>R</original>
    <variation>S</variation>
    <location>
        <position position="185"/>
    </location>
</feature>
<feature type="sequence variant" id="VAR_064591" description="In dbSNP:rs17852021." evidence="3">
    <original>R</original>
    <variation>G</variation>
    <location>
        <position position="206"/>
    </location>
</feature>
<feature type="sequence variant" id="VAR_064592" description="In dbSNP:rs11865588.">
    <original>D</original>
    <variation>N</variation>
    <location>
        <position position="340"/>
    </location>
</feature>
<feature type="sequence variant" id="VAR_064593" description="In dbSNP:rs34965375.">
    <original>T</original>
    <variation>A</variation>
    <location>
        <position position="426"/>
    </location>
</feature>
<feature type="sequence variant" id="VAR_064594" description="In dbSNP:rs36085499.">
    <original>A</original>
    <variation>V</variation>
    <location>
        <position position="445"/>
    </location>
</feature>
<feature type="mutagenesis site" description="Greatly decreases automethylation. Impairs the methyltransferase activity toward RELA and PAK4; when associated with Arg-179." evidence="7">
    <original>K</original>
    <variation>R</variation>
    <location>
        <position position="39"/>
    </location>
</feature>
<feature type="mutagenesis site" description="Abolishes automethylation. Impairs the methyltransferase activity toward RELA and PAK4; when associated with Arg-39." evidence="7">
    <original>K</original>
    <variation>R</variation>
    <location>
        <position position="179"/>
    </location>
</feature>
<feature type="mutagenesis site" description="Impairs the methyltransferase activity toward RELA." evidence="5">
    <original>N</original>
    <variation>A</variation>
    <location>
        <position position="283"/>
    </location>
</feature>
<feature type="mutagenesis site" description="Decreases the methyltransferase activity toward RELA." evidence="5">
    <original>N</original>
    <variation>F</variation>
    <location>
        <position position="283"/>
    </location>
</feature>
<feature type="mutagenesis site" description="Abolishes methyltransferase activity. Greatly decreases the stability of monomeric, homodimeric and homotrimeric structures." evidence="4 7">
    <original>Y</original>
    <variation>A</variation>
    <location>
        <position position="285"/>
    </location>
</feature>
<feature type="mutagenesis site" description="Has little effect on automethylation level." evidence="7">
    <original>K</original>
    <variation>R</variation>
    <location>
        <position position="372"/>
    </location>
</feature>
<feature type="sequence conflict" description="In Ref. 1; BAF83184." evidence="10" ref="1">
    <original>T</original>
    <variation>A</variation>
    <location>
        <position position="102"/>
    </location>
</feature>
<feature type="sequence conflict" description="In Ref. 1; BAB15011." evidence="10" ref="1">
    <original>S</original>
    <variation>G</variation>
    <location>
        <position position="118"/>
    </location>
</feature>
<feature type="sequence conflict" description="In Ref. 1; BAB15011." evidence="10" ref="1">
    <original>E</original>
    <variation>V</variation>
    <location>
        <position position="227"/>
    </location>
</feature>
<feature type="helix" evidence="16">
    <location>
        <begin position="20"/>
        <end position="32"/>
    </location>
</feature>
<feature type="strand" evidence="16">
    <location>
        <begin position="65"/>
        <end position="70"/>
    </location>
</feature>
<feature type="strand" evidence="16">
    <location>
        <begin position="72"/>
        <end position="81"/>
    </location>
</feature>
<feature type="strand" evidence="16">
    <location>
        <begin position="88"/>
        <end position="93"/>
    </location>
</feature>
<feature type="helix" evidence="16">
    <location>
        <begin position="94"/>
        <end position="96"/>
    </location>
</feature>
<feature type="strand" evidence="17">
    <location>
        <begin position="97"/>
        <end position="99"/>
    </location>
</feature>
<feature type="turn" evidence="16">
    <location>
        <begin position="100"/>
        <end position="102"/>
    </location>
</feature>
<feature type="helix" evidence="16">
    <location>
        <begin position="106"/>
        <end position="111"/>
    </location>
</feature>
<feature type="helix" evidence="16">
    <location>
        <begin position="114"/>
        <end position="116"/>
    </location>
</feature>
<feature type="strand" evidence="16">
    <location>
        <begin position="119"/>
        <end position="121"/>
    </location>
</feature>
<feature type="helix" evidence="16">
    <location>
        <begin position="123"/>
        <end position="134"/>
    </location>
</feature>
<feature type="helix" evidence="16">
    <location>
        <begin position="141"/>
        <end position="144"/>
    </location>
</feature>
<feature type="helix" evidence="16">
    <location>
        <begin position="150"/>
        <end position="152"/>
    </location>
</feature>
<feature type="helix" evidence="16">
    <location>
        <begin position="156"/>
        <end position="158"/>
    </location>
</feature>
<feature type="helix" evidence="16">
    <location>
        <begin position="161"/>
        <end position="168"/>
    </location>
</feature>
<feature type="helix" evidence="16">
    <location>
        <begin position="173"/>
        <end position="190"/>
    </location>
</feature>
<feature type="helix" evidence="16">
    <location>
        <begin position="192"/>
        <end position="198"/>
    </location>
</feature>
<feature type="turn" evidence="16">
    <location>
        <begin position="200"/>
        <end position="202"/>
    </location>
</feature>
<feature type="helix" evidence="16">
    <location>
        <begin position="205"/>
        <end position="207"/>
    </location>
</feature>
<feature type="helix" evidence="16">
    <location>
        <begin position="210"/>
        <end position="223"/>
    </location>
</feature>
<feature type="helix" evidence="16">
    <location>
        <begin position="247"/>
        <end position="249"/>
    </location>
</feature>
<feature type="strand" evidence="16">
    <location>
        <begin position="257"/>
        <end position="262"/>
    </location>
</feature>
<feature type="strand" evidence="16">
    <location>
        <begin position="264"/>
        <end position="273"/>
    </location>
</feature>
<feature type="strand" evidence="16">
    <location>
        <begin position="280"/>
        <end position="283"/>
    </location>
</feature>
<feature type="helix" evidence="16">
    <location>
        <begin position="290"/>
        <end position="297"/>
    </location>
</feature>
<feature type="strand" evidence="16">
    <location>
        <begin position="310"/>
        <end position="314"/>
    </location>
</feature>
<feature type="helix" evidence="16">
    <location>
        <begin position="315"/>
        <end position="324"/>
    </location>
</feature>
<feature type="helix" evidence="16">
    <location>
        <begin position="329"/>
        <end position="344"/>
    </location>
</feature>
<feature type="strand" evidence="16">
    <location>
        <begin position="353"/>
        <end position="363"/>
    </location>
</feature>
<feature type="helix" evidence="16">
    <location>
        <begin position="364"/>
        <end position="375"/>
    </location>
</feature>
<feature type="helix" evidence="16">
    <location>
        <begin position="378"/>
        <end position="386"/>
    </location>
</feature>
<feature type="turn" evidence="16">
    <location>
        <begin position="402"/>
        <end position="404"/>
    </location>
</feature>
<feature type="helix" evidence="16">
    <location>
        <begin position="405"/>
        <end position="407"/>
    </location>
</feature>
<feature type="helix" evidence="16">
    <location>
        <begin position="410"/>
        <end position="424"/>
    </location>
</feature>
<feature type="strand" evidence="16">
    <location>
        <begin position="427"/>
        <end position="429"/>
    </location>
</feature>
<feature type="helix" evidence="16">
    <location>
        <begin position="431"/>
        <end position="439"/>
    </location>
</feature>
<feature type="helix" evidence="16">
    <location>
        <begin position="441"/>
        <end position="446"/>
    </location>
</feature>
<feature type="helix" evidence="16">
    <location>
        <begin position="449"/>
        <end position="471"/>
    </location>
</feature>
<name>SETD6_HUMAN</name>
<reference key="1">
    <citation type="journal article" date="2004" name="Nat. Genet.">
        <title>Complete sequencing and characterization of 21,243 full-length human cDNAs.</title>
        <authorList>
            <person name="Ota T."/>
            <person name="Suzuki Y."/>
            <person name="Nishikawa T."/>
            <person name="Otsuki T."/>
            <person name="Sugiyama T."/>
            <person name="Irie R."/>
            <person name="Wakamatsu A."/>
            <person name="Hayashi K."/>
            <person name="Sato H."/>
            <person name="Nagai K."/>
            <person name="Kimura K."/>
            <person name="Makita H."/>
            <person name="Sekine M."/>
            <person name="Obayashi M."/>
            <person name="Nishi T."/>
            <person name="Shibahara T."/>
            <person name="Tanaka T."/>
            <person name="Ishii S."/>
            <person name="Yamamoto J."/>
            <person name="Saito K."/>
            <person name="Kawai Y."/>
            <person name="Isono Y."/>
            <person name="Nakamura Y."/>
            <person name="Nagahari K."/>
            <person name="Murakami K."/>
            <person name="Yasuda T."/>
            <person name="Iwayanagi T."/>
            <person name="Wagatsuma M."/>
            <person name="Shiratori A."/>
            <person name="Sudo H."/>
            <person name="Hosoiri T."/>
            <person name="Kaku Y."/>
            <person name="Kodaira H."/>
            <person name="Kondo H."/>
            <person name="Sugawara M."/>
            <person name="Takahashi M."/>
            <person name="Kanda K."/>
            <person name="Yokoi T."/>
            <person name="Furuya T."/>
            <person name="Kikkawa E."/>
            <person name="Omura Y."/>
            <person name="Abe K."/>
            <person name="Kamihara K."/>
            <person name="Katsuta N."/>
            <person name="Sato K."/>
            <person name="Tanikawa M."/>
            <person name="Yamazaki M."/>
            <person name="Ninomiya K."/>
            <person name="Ishibashi T."/>
            <person name="Yamashita H."/>
            <person name="Murakawa K."/>
            <person name="Fujimori K."/>
            <person name="Tanai H."/>
            <person name="Kimata M."/>
            <person name="Watanabe M."/>
            <person name="Hiraoka S."/>
            <person name="Chiba Y."/>
            <person name="Ishida S."/>
            <person name="Ono Y."/>
            <person name="Takiguchi S."/>
            <person name="Watanabe S."/>
            <person name="Yosida M."/>
            <person name="Hotuta T."/>
            <person name="Kusano J."/>
            <person name="Kanehori K."/>
            <person name="Takahashi-Fujii A."/>
            <person name="Hara H."/>
            <person name="Tanase T.-O."/>
            <person name="Nomura Y."/>
            <person name="Togiya S."/>
            <person name="Komai F."/>
            <person name="Hara R."/>
            <person name="Takeuchi K."/>
            <person name="Arita M."/>
            <person name="Imose N."/>
            <person name="Musashino K."/>
            <person name="Yuuki H."/>
            <person name="Oshima A."/>
            <person name="Sasaki N."/>
            <person name="Aotsuka S."/>
            <person name="Yoshikawa Y."/>
            <person name="Matsunawa H."/>
            <person name="Ichihara T."/>
            <person name="Shiohata N."/>
            <person name="Sano S."/>
            <person name="Moriya S."/>
            <person name="Momiyama H."/>
            <person name="Satoh N."/>
            <person name="Takami S."/>
            <person name="Terashima Y."/>
            <person name="Suzuki O."/>
            <person name="Nakagawa S."/>
            <person name="Senoh A."/>
            <person name="Mizoguchi H."/>
            <person name="Goto Y."/>
            <person name="Shimizu F."/>
            <person name="Wakebe H."/>
            <person name="Hishigaki H."/>
            <person name="Watanabe T."/>
            <person name="Sugiyama A."/>
            <person name="Takemoto M."/>
            <person name="Kawakami B."/>
            <person name="Yamazaki M."/>
            <person name="Watanabe K."/>
            <person name="Kumagai A."/>
            <person name="Itakura S."/>
            <person name="Fukuzumi Y."/>
            <person name="Fujimori Y."/>
            <person name="Komiyama M."/>
            <person name="Tashiro H."/>
            <person name="Tanigami A."/>
            <person name="Fujiwara T."/>
            <person name="Ono T."/>
            <person name="Yamada K."/>
            <person name="Fujii Y."/>
            <person name="Ozaki K."/>
            <person name="Hirao M."/>
            <person name="Ohmori Y."/>
            <person name="Kawabata A."/>
            <person name="Hikiji T."/>
            <person name="Kobatake N."/>
            <person name="Inagaki H."/>
            <person name="Ikema Y."/>
            <person name="Okamoto S."/>
            <person name="Okitani R."/>
            <person name="Kawakami T."/>
            <person name="Noguchi S."/>
            <person name="Itoh T."/>
            <person name="Shigeta K."/>
            <person name="Senba T."/>
            <person name="Matsumura K."/>
            <person name="Nakajima Y."/>
            <person name="Mizuno T."/>
            <person name="Morinaga M."/>
            <person name="Sasaki M."/>
            <person name="Togashi T."/>
            <person name="Oyama M."/>
            <person name="Hata H."/>
            <person name="Watanabe M."/>
            <person name="Komatsu T."/>
            <person name="Mizushima-Sugano J."/>
            <person name="Satoh T."/>
            <person name="Shirai Y."/>
            <person name="Takahashi Y."/>
            <person name="Nakagawa K."/>
            <person name="Okumura K."/>
            <person name="Nagase T."/>
            <person name="Nomura N."/>
            <person name="Kikuchi H."/>
            <person name="Masuho Y."/>
            <person name="Yamashita R."/>
            <person name="Nakai K."/>
            <person name="Yada T."/>
            <person name="Nakamura Y."/>
            <person name="Ohara O."/>
            <person name="Isogai T."/>
            <person name="Sugano S."/>
        </authorList>
    </citation>
    <scope>NUCLEOTIDE SEQUENCE [LARGE SCALE MRNA] (ISOFORMS 1 AND 2)</scope>
    <source>
        <tissue>Brain</tissue>
    </source>
</reference>
<reference key="2">
    <citation type="journal article" date="2004" name="Nature">
        <title>The sequence and analysis of duplication-rich human chromosome 16.</title>
        <authorList>
            <person name="Martin J."/>
            <person name="Han C."/>
            <person name="Gordon L.A."/>
            <person name="Terry A."/>
            <person name="Prabhakar S."/>
            <person name="She X."/>
            <person name="Xie G."/>
            <person name="Hellsten U."/>
            <person name="Chan Y.M."/>
            <person name="Altherr M."/>
            <person name="Couronne O."/>
            <person name="Aerts A."/>
            <person name="Bajorek E."/>
            <person name="Black S."/>
            <person name="Blumer H."/>
            <person name="Branscomb E."/>
            <person name="Brown N.C."/>
            <person name="Bruno W.J."/>
            <person name="Buckingham J.M."/>
            <person name="Callen D.F."/>
            <person name="Campbell C.S."/>
            <person name="Campbell M.L."/>
            <person name="Campbell E.W."/>
            <person name="Caoile C."/>
            <person name="Challacombe J.F."/>
            <person name="Chasteen L.A."/>
            <person name="Chertkov O."/>
            <person name="Chi H.C."/>
            <person name="Christensen M."/>
            <person name="Clark L.M."/>
            <person name="Cohn J.D."/>
            <person name="Denys M."/>
            <person name="Detter J.C."/>
            <person name="Dickson M."/>
            <person name="Dimitrijevic-Bussod M."/>
            <person name="Escobar J."/>
            <person name="Fawcett J.J."/>
            <person name="Flowers D."/>
            <person name="Fotopulos D."/>
            <person name="Glavina T."/>
            <person name="Gomez M."/>
            <person name="Gonzales E."/>
            <person name="Goodstein D."/>
            <person name="Goodwin L.A."/>
            <person name="Grady D.L."/>
            <person name="Grigoriev I."/>
            <person name="Groza M."/>
            <person name="Hammon N."/>
            <person name="Hawkins T."/>
            <person name="Haydu L."/>
            <person name="Hildebrand C.E."/>
            <person name="Huang W."/>
            <person name="Israni S."/>
            <person name="Jett J."/>
            <person name="Jewett P.B."/>
            <person name="Kadner K."/>
            <person name="Kimball H."/>
            <person name="Kobayashi A."/>
            <person name="Krawczyk M.-C."/>
            <person name="Leyba T."/>
            <person name="Longmire J.L."/>
            <person name="Lopez F."/>
            <person name="Lou Y."/>
            <person name="Lowry S."/>
            <person name="Ludeman T."/>
            <person name="Manohar C.F."/>
            <person name="Mark G.A."/>
            <person name="McMurray K.L."/>
            <person name="Meincke L.J."/>
            <person name="Morgan J."/>
            <person name="Moyzis R.K."/>
            <person name="Mundt M.O."/>
            <person name="Munk A.C."/>
            <person name="Nandkeshwar R.D."/>
            <person name="Pitluck S."/>
            <person name="Pollard M."/>
            <person name="Predki P."/>
            <person name="Parson-Quintana B."/>
            <person name="Ramirez L."/>
            <person name="Rash S."/>
            <person name="Retterer J."/>
            <person name="Ricke D.O."/>
            <person name="Robinson D.L."/>
            <person name="Rodriguez A."/>
            <person name="Salamov A."/>
            <person name="Saunders E.H."/>
            <person name="Scott D."/>
            <person name="Shough T."/>
            <person name="Stallings R.L."/>
            <person name="Stalvey M."/>
            <person name="Sutherland R.D."/>
            <person name="Tapia R."/>
            <person name="Tesmer J.G."/>
            <person name="Thayer N."/>
            <person name="Thompson L.S."/>
            <person name="Tice H."/>
            <person name="Torney D.C."/>
            <person name="Tran-Gyamfi M."/>
            <person name="Tsai M."/>
            <person name="Ulanovsky L.E."/>
            <person name="Ustaszewska A."/>
            <person name="Vo N."/>
            <person name="White P.S."/>
            <person name="Williams A.L."/>
            <person name="Wills P.L."/>
            <person name="Wu J.-R."/>
            <person name="Wu K."/>
            <person name="Yang J."/>
            <person name="DeJong P."/>
            <person name="Bruce D."/>
            <person name="Doggett N.A."/>
            <person name="Deaven L."/>
            <person name="Schmutz J."/>
            <person name="Grimwood J."/>
            <person name="Richardson P."/>
            <person name="Rokhsar D.S."/>
            <person name="Eichler E.E."/>
            <person name="Gilna P."/>
            <person name="Lucas S.M."/>
            <person name="Myers R.M."/>
            <person name="Rubin E.M."/>
            <person name="Pennacchio L.A."/>
        </authorList>
    </citation>
    <scope>NUCLEOTIDE SEQUENCE [LARGE SCALE GENOMIC DNA]</scope>
</reference>
<reference key="3">
    <citation type="journal article" date="2004" name="Genome Res.">
        <title>The status, quality, and expansion of the NIH full-length cDNA project: the Mammalian Gene Collection (MGC).</title>
        <authorList>
            <consortium name="The MGC Project Team"/>
        </authorList>
    </citation>
    <scope>NUCLEOTIDE SEQUENCE [LARGE SCALE MRNA] (ISOFORM 1)</scope>
    <scope>VARIANTS SER-185 AND GLY-206</scope>
    <source>
        <tissue>Brain</tissue>
    </source>
</reference>
<reference key="4">
    <citation type="journal article" date="2011" name="Nat. Immunol.">
        <title>Lysine methylation of the NF-kappaB subunit RelA by SETD6 couples activity of the histone methyltransferase GLP at chromatin to tonic repression of NF-kappaB signaling.</title>
        <authorList>
            <person name="Levy D."/>
            <person name="Kuo A.J."/>
            <person name="Chang Y."/>
            <person name="Schaefer U."/>
            <person name="Kitson C."/>
            <person name="Cheung P."/>
            <person name="Espejo A."/>
            <person name="Zee B.M."/>
            <person name="Liu C.L."/>
            <person name="Tangsombatvisit S."/>
            <person name="Tennen R.I."/>
            <person name="Kuo A.Y."/>
            <person name="Tanjing S."/>
            <person name="Cheung R."/>
            <person name="Chua K.F."/>
            <person name="Utz P.J."/>
            <person name="Shi X."/>
            <person name="Prinjha R.K."/>
            <person name="Lee K."/>
            <person name="Garcia B.A."/>
            <person name="Bedford M.T."/>
            <person name="Tarakhovsky A."/>
            <person name="Cheng X."/>
            <person name="Gozani O."/>
        </authorList>
    </citation>
    <scope>FUNCTION</scope>
    <scope>CATALYTIC ACTIVITY</scope>
    <scope>SUBCELLULAR LOCATION</scope>
    <scope>MUTAGENESIS OF TYR-285</scope>
</reference>
<reference key="5">
    <citation type="journal article" date="2013" name="Epigenetics">
        <title>SETD6 monomethylates H2AZ on lysine 7 and is required for the maintenance of embryonic stem cell self-renewal.</title>
        <authorList>
            <person name="Binda O."/>
            <person name="Sevilla A."/>
            <person name="LeRoy G."/>
            <person name="Lemischka I.R."/>
            <person name="Garcia B.A."/>
            <person name="Richard S."/>
        </authorList>
    </citation>
    <scope>FUNCTION</scope>
    <scope>CATALYTIC ACTIVITY</scope>
</reference>
<reference key="6">
    <citation type="journal article" date="2018" name="J. Mol. Biol.">
        <title>Oligomerization and Auto-methylation of the Human Lysine Methyltransferase SETD6.</title>
        <authorList>
            <person name="Weil L.E."/>
            <person name="Shmidov Y."/>
            <person name="Kublanovsky M."/>
            <person name="Morgenstern D."/>
            <person name="Feldman M."/>
            <person name="Bitton R."/>
            <person name="Levy D."/>
        </authorList>
    </citation>
    <scope>FUNCTION</scope>
    <scope>CATALYTIC ACTIVITY</scope>
    <scope>ACTIVITY REGULATION</scope>
    <scope>SUBUNIT</scope>
    <scope>METHYLATION AT LYS-39; LYS-179 AND LYS-372</scope>
    <scope>IDENTIFICATION BY MASS SPECTROMETRY</scope>
    <scope>MUTAGENESIS OF LYS-39; LYS-179; TYR-285 AND LYS-372</scope>
</reference>
<reference key="7">
    <citation type="journal article" date="2011" name="Nucleic Acids Res.">
        <title>Structural basis of SETD6-mediated regulation of the NF-kB network via methyl-lysine signaling.</title>
        <authorList>
            <person name="Chang Y."/>
            <person name="Levy D."/>
            <person name="Horton J.R."/>
            <person name="Peng J."/>
            <person name="Zhang X."/>
            <person name="Gozani O."/>
            <person name="Cheng X."/>
        </authorList>
    </citation>
    <scope>X-RAY CRYSTALLOGRAPHY (2.09 ANGSTROMS) IN COMPLEX WITH S-ADENOSYL-L-METHIONINE AND SUBSTRATE</scope>
    <scope>FUNCTION</scope>
    <scope>CATALYTIC ACTIVITY</scope>
    <scope>BIOPHYSICOCHEMICAL PROPERTIES</scope>
    <scope>MUTAGENESIS OF ASN-283</scope>
</reference>
<evidence type="ECO:0000250" key="1">
    <source>
        <dbReference type="UniProtKB" id="Q9CWY3"/>
    </source>
</evidence>
<evidence type="ECO:0000255" key="2">
    <source>
        <dbReference type="PROSITE-ProRule" id="PRU00190"/>
    </source>
</evidence>
<evidence type="ECO:0000269" key="3">
    <source>
    </source>
</evidence>
<evidence type="ECO:0000269" key="4">
    <source>
    </source>
</evidence>
<evidence type="ECO:0000269" key="5">
    <source>
    </source>
</evidence>
<evidence type="ECO:0000269" key="6">
    <source>
    </source>
</evidence>
<evidence type="ECO:0000269" key="7">
    <source>
    </source>
</evidence>
<evidence type="ECO:0000303" key="8">
    <source>
    </source>
</evidence>
<evidence type="ECO:0000303" key="9">
    <source>
    </source>
</evidence>
<evidence type="ECO:0000305" key="10"/>
<evidence type="ECO:0000305" key="11">
    <source>
    </source>
</evidence>
<evidence type="ECO:0000305" key="12">
    <source>
    </source>
</evidence>
<evidence type="ECO:0000305" key="13">
    <source>
    </source>
</evidence>
<evidence type="ECO:0000305" key="14">
    <source>
    </source>
</evidence>
<evidence type="ECO:0000312" key="15">
    <source>
        <dbReference type="HGNC" id="HGNC:26116"/>
    </source>
</evidence>
<evidence type="ECO:0007829" key="16">
    <source>
        <dbReference type="PDB" id="3QXY"/>
    </source>
</evidence>
<evidence type="ECO:0007829" key="17">
    <source>
        <dbReference type="PDB" id="3RC0"/>
    </source>
</evidence>
<protein>
    <recommendedName>
        <fullName>N-lysine methyltransferase SETD6</fullName>
        <ecNumber evidence="4 5 6 7">2.1.1.-</ecNumber>
    </recommendedName>
    <alternativeName>
        <fullName>SET domain-containing protein 6</fullName>
    </alternativeName>
</protein>
<sequence length="473" mass="53189">MATQAKRPRVAGPVDGGDLDPVACFLSWCRRVGLELSPKVSERAGGRRTRGGARAALTSPPAQVAVSRQGTVAGYGMVARESVQAGELLFVVPRAALLSQHTCSIGGLLERERVALQSQSGWVPLLLALLHELQAPASRWRPYFALWPELGRLEHPMFWPEEERRCLLQGTGVPEAVEKDLANIRSEYQSIVLPFMEAHPDLFSLRVRSLELYHQLVALVMAYSFQEPLEEEEDEKEPNSPVMVPAADILNHLANHNANLEYSANCLRMVATQPIPKGHEIFNTYGQMANWQLIHMYGFVEPYPDNTDDTADIQMVTVREAALQGTKTEAERHLVYERWDFLCKLEMVGEEGAFVIGREEVLTEEELTTTLKVLCMPAEEFRELKDQDGGGDDKREEGSLTITNIPKLKASWRQLLQNSVLLTLQTYATDLKTDQGLLSNKEVYAKLSWREQQALQVRYGQKMILHQLLELTS</sequence>
<comment type="function">
    <text evidence="1 4 5 6 7">Protein-lysine N-methyltransferase. Monomethylates 'Lys-310' of the RELA subunit of NF-kappa-B complex, leading to down-regulation of NF-kappa-B transcription factor activity (PubMed:21131967, PubMed:21515635, PubMed:30189201). Monomethylates 'Lys-8' of H2AZ (H2AZK8me1) (PubMed:23324626). Required for the maintenance of embryonic stem cell self-renewal (By similarity). Methylates PAK4.</text>
</comment>
<comment type="catalytic activity">
    <reaction evidence="4 5 6 7">
        <text>L-lysyl-[protein] + S-adenosyl-L-methionine = N(6)-methyl-L-lysyl-[protein] + S-adenosyl-L-homocysteine + H(+)</text>
        <dbReference type="Rhea" id="RHEA:51736"/>
        <dbReference type="Rhea" id="RHEA-COMP:9752"/>
        <dbReference type="Rhea" id="RHEA-COMP:13053"/>
        <dbReference type="ChEBI" id="CHEBI:15378"/>
        <dbReference type="ChEBI" id="CHEBI:29969"/>
        <dbReference type="ChEBI" id="CHEBI:57856"/>
        <dbReference type="ChEBI" id="CHEBI:59789"/>
        <dbReference type="ChEBI" id="CHEBI:61929"/>
    </reaction>
    <physiologicalReaction direction="left-to-right" evidence="11 12 13 14">
        <dbReference type="Rhea" id="RHEA:51737"/>
    </physiologicalReaction>
</comment>
<comment type="catalytic activity">
    <reaction evidence="6">
        <text>L-lysyl(8)-[histone H2AZ] + S-adenosyl-L-methionine = N(6)-methyl-L-lysyl(8)-[histone H2AZ] + S-adenosyl-L-homocysteine + H(+)</text>
        <dbReference type="Rhea" id="RHEA:67808"/>
        <dbReference type="Rhea" id="RHEA-COMP:17357"/>
        <dbReference type="Rhea" id="RHEA-COMP:17358"/>
        <dbReference type="ChEBI" id="CHEBI:15378"/>
        <dbReference type="ChEBI" id="CHEBI:29969"/>
        <dbReference type="ChEBI" id="CHEBI:57856"/>
        <dbReference type="ChEBI" id="CHEBI:59789"/>
        <dbReference type="ChEBI" id="CHEBI:61929"/>
    </reaction>
    <physiologicalReaction direction="left-to-right" evidence="13">
        <dbReference type="Rhea" id="RHEA:67809"/>
    </physiologicalReaction>
</comment>
<comment type="activity regulation">
    <text evidence="7">Activated by automethylation.</text>
</comment>
<comment type="biophysicochemical properties">
    <phDependence>
        <text evidence="5">Optimum pH is 10.</text>
    </phDependence>
</comment>
<comment type="subunit">
    <text evidence="7">Monomer, homodimer and homotrimer; these structures are stabilized in the presence of S-adenosyl-L-methionine (SAM).</text>
</comment>
<comment type="interaction">
    <interactant intactId="EBI-3863032">
        <id>Q8TBK2</id>
    </interactant>
    <interactant intactId="EBI-644400">
        <id>Q04207</id>
        <label>Rela</label>
    </interactant>
    <organismsDiffer>true</organismsDiffer>
    <experiments>4</experiments>
</comment>
<comment type="subcellular location">
    <subcellularLocation>
        <location evidence="4">Nucleus</location>
    </subcellularLocation>
</comment>
<comment type="alternative products">
    <event type="alternative splicing"/>
    <isoform>
        <id>Q8TBK2-1</id>
        <name>1</name>
        <sequence type="displayed"/>
    </isoform>
    <isoform>
        <id>Q8TBK2-2</id>
        <name>2</name>
        <sequence type="described" ref="VSP_024093"/>
    </isoform>
</comment>
<comment type="PTM">
    <text evidence="7">Automethylated; Lys-39 and Lys-179 serve as the major automethylation sites.</text>
</comment>
<comment type="similarity">
    <text evidence="2">Belongs to the class V-like SAM-binding methyltransferase superfamily. Histone-lysine methyltransferase family. SETD6 subfamily.</text>
</comment>